<feature type="chain" id="PRO_0000184374" description="Ribosomal RNA small subunit methyltransferase G">
    <location>
        <begin position="1"/>
        <end position="206"/>
    </location>
</feature>
<feature type="binding site" evidence="1">
    <location>
        <position position="73"/>
    </location>
    <ligand>
        <name>S-adenosyl-L-methionine</name>
        <dbReference type="ChEBI" id="CHEBI:59789"/>
    </ligand>
</feature>
<feature type="binding site" evidence="1">
    <location>
        <position position="78"/>
    </location>
    <ligand>
        <name>S-adenosyl-L-methionine</name>
        <dbReference type="ChEBI" id="CHEBI:59789"/>
    </ligand>
</feature>
<feature type="binding site" evidence="1">
    <location>
        <begin position="124"/>
        <end position="125"/>
    </location>
    <ligand>
        <name>S-adenosyl-L-methionine</name>
        <dbReference type="ChEBI" id="CHEBI:59789"/>
    </ligand>
</feature>
<feature type="binding site" evidence="1">
    <location>
        <position position="139"/>
    </location>
    <ligand>
        <name>S-adenosyl-L-methionine</name>
        <dbReference type="ChEBI" id="CHEBI:59789"/>
    </ligand>
</feature>
<evidence type="ECO:0000255" key="1">
    <source>
        <dbReference type="HAMAP-Rule" id="MF_00074"/>
    </source>
</evidence>
<protein>
    <recommendedName>
        <fullName evidence="1">Ribosomal RNA small subunit methyltransferase G</fullName>
        <ecNumber evidence="1">2.1.1.170</ecNumber>
    </recommendedName>
    <alternativeName>
        <fullName evidence="1">16S rRNA 7-methylguanosine methyltransferase</fullName>
        <shortName evidence="1">16S rRNA m7G methyltransferase</shortName>
    </alternativeName>
</protein>
<organism>
    <name type="scientific">Yersinia pseudotuberculosis serotype I (strain IP32953)</name>
    <dbReference type="NCBI Taxonomy" id="273123"/>
    <lineage>
        <taxon>Bacteria</taxon>
        <taxon>Pseudomonadati</taxon>
        <taxon>Pseudomonadota</taxon>
        <taxon>Gammaproteobacteria</taxon>
        <taxon>Enterobacterales</taxon>
        <taxon>Yersiniaceae</taxon>
        <taxon>Yersinia</taxon>
    </lineage>
</organism>
<dbReference type="EC" id="2.1.1.170" evidence="1"/>
<dbReference type="EMBL" id="BX936398">
    <property type="protein sequence ID" value="CAH23213.1"/>
    <property type="molecule type" value="Genomic_DNA"/>
</dbReference>
<dbReference type="RefSeq" id="WP_002212261.1">
    <property type="nucleotide sequence ID" value="NZ_CP009712.1"/>
</dbReference>
<dbReference type="SMR" id="Q663Q0"/>
<dbReference type="GeneID" id="57974595"/>
<dbReference type="KEGG" id="ypo:BZ17_2600"/>
<dbReference type="KEGG" id="yps:YPTB3975"/>
<dbReference type="PATRIC" id="fig|273123.14.peg.2726"/>
<dbReference type="Proteomes" id="UP000001011">
    <property type="component" value="Chromosome"/>
</dbReference>
<dbReference type="GO" id="GO:0005829">
    <property type="term" value="C:cytosol"/>
    <property type="evidence" value="ECO:0007669"/>
    <property type="project" value="TreeGrafter"/>
</dbReference>
<dbReference type="GO" id="GO:0070043">
    <property type="term" value="F:rRNA (guanine-N7-)-methyltransferase activity"/>
    <property type="evidence" value="ECO:0007669"/>
    <property type="project" value="UniProtKB-UniRule"/>
</dbReference>
<dbReference type="CDD" id="cd02440">
    <property type="entry name" value="AdoMet_MTases"/>
    <property type="match status" value="1"/>
</dbReference>
<dbReference type="FunFam" id="3.40.50.150:FF:000032">
    <property type="entry name" value="Ribosomal RNA small subunit methyltransferase G"/>
    <property type="match status" value="1"/>
</dbReference>
<dbReference type="Gene3D" id="3.40.50.150">
    <property type="entry name" value="Vaccinia Virus protein VP39"/>
    <property type="match status" value="1"/>
</dbReference>
<dbReference type="HAMAP" id="MF_00074">
    <property type="entry name" value="16SrRNA_methyltr_G"/>
    <property type="match status" value="1"/>
</dbReference>
<dbReference type="InterPro" id="IPR003682">
    <property type="entry name" value="rRNA_ssu_MeTfrase_G"/>
</dbReference>
<dbReference type="InterPro" id="IPR029063">
    <property type="entry name" value="SAM-dependent_MTases_sf"/>
</dbReference>
<dbReference type="NCBIfam" id="TIGR00138">
    <property type="entry name" value="rsmG_gidB"/>
    <property type="match status" value="1"/>
</dbReference>
<dbReference type="PANTHER" id="PTHR31760">
    <property type="entry name" value="S-ADENOSYL-L-METHIONINE-DEPENDENT METHYLTRANSFERASES SUPERFAMILY PROTEIN"/>
    <property type="match status" value="1"/>
</dbReference>
<dbReference type="PANTHER" id="PTHR31760:SF0">
    <property type="entry name" value="S-ADENOSYL-L-METHIONINE-DEPENDENT METHYLTRANSFERASES SUPERFAMILY PROTEIN"/>
    <property type="match status" value="1"/>
</dbReference>
<dbReference type="Pfam" id="PF02527">
    <property type="entry name" value="GidB"/>
    <property type="match status" value="1"/>
</dbReference>
<dbReference type="PIRSF" id="PIRSF003078">
    <property type="entry name" value="GidB"/>
    <property type="match status" value="1"/>
</dbReference>
<dbReference type="SUPFAM" id="SSF53335">
    <property type="entry name" value="S-adenosyl-L-methionine-dependent methyltransferases"/>
    <property type="match status" value="1"/>
</dbReference>
<keyword id="KW-0963">Cytoplasm</keyword>
<keyword id="KW-0489">Methyltransferase</keyword>
<keyword id="KW-0698">rRNA processing</keyword>
<keyword id="KW-0949">S-adenosyl-L-methionine</keyword>
<keyword id="KW-0808">Transferase</keyword>
<reference key="1">
    <citation type="journal article" date="2004" name="Proc. Natl. Acad. Sci. U.S.A.">
        <title>Insights into the evolution of Yersinia pestis through whole-genome comparison with Yersinia pseudotuberculosis.</title>
        <authorList>
            <person name="Chain P.S.G."/>
            <person name="Carniel E."/>
            <person name="Larimer F.W."/>
            <person name="Lamerdin J."/>
            <person name="Stoutland P.O."/>
            <person name="Regala W.M."/>
            <person name="Georgescu A.M."/>
            <person name="Vergez L.M."/>
            <person name="Land M.L."/>
            <person name="Motin V.L."/>
            <person name="Brubaker R.R."/>
            <person name="Fowler J."/>
            <person name="Hinnebusch J."/>
            <person name="Marceau M."/>
            <person name="Medigue C."/>
            <person name="Simonet M."/>
            <person name="Chenal-Francisque V."/>
            <person name="Souza B."/>
            <person name="Dacheux D."/>
            <person name="Elliott J.M."/>
            <person name="Derbise A."/>
            <person name="Hauser L.J."/>
            <person name="Garcia E."/>
        </authorList>
    </citation>
    <scope>NUCLEOTIDE SEQUENCE [LARGE SCALE GENOMIC DNA]</scope>
    <source>
        <strain>IP32953</strain>
    </source>
</reference>
<name>RSMG_YERPS</name>
<comment type="function">
    <text evidence="1">Specifically methylates the N7 position of guanine in position 527 of 16S rRNA.</text>
</comment>
<comment type="catalytic activity">
    <reaction evidence="1">
        <text>guanosine(527) in 16S rRNA + S-adenosyl-L-methionine = N(7)-methylguanosine(527) in 16S rRNA + S-adenosyl-L-homocysteine</text>
        <dbReference type="Rhea" id="RHEA:42732"/>
        <dbReference type="Rhea" id="RHEA-COMP:10209"/>
        <dbReference type="Rhea" id="RHEA-COMP:10210"/>
        <dbReference type="ChEBI" id="CHEBI:57856"/>
        <dbReference type="ChEBI" id="CHEBI:59789"/>
        <dbReference type="ChEBI" id="CHEBI:74269"/>
        <dbReference type="ChEBI" id="CHEBI:74480"/>
        <dbReference type="EC" id="2.1.1.170"/>
    </reaction>
</comment>
<comment type="subcellular location">
    <subcellularLocation>
        <location evidence="1">Cytoplasm</location>
    </subcellularLocation>
</comment>
<comment type="similarity">
    <text evidence="1">Belongs to the methyltransferase superfamily. RNA methyltransferase RsmG family.</text>
</comment>
<accession>Q663Q0</accession>
<proteinExistence type="inferred from homology"/>
<gene>
    <name evidence="1" type="primary">rsmG</name>
    <name type="ordered locus">YPTB3975</name>
</gene>
<sequence>MLKKLDSLLTVAGITLPDQQKHQLIGYVELLDKWNKAYNLTSVRDPQQMLVRHILDSIVVNPHLQGSRFIDVGTGPGLPGIPLAIVRPDAHFTLLDSLGKRVRFLRQVQHELGLNNIEPVQSRVEAFTSEPPFDGVISRAFASLQDMLSWCHHLPAKPEGRFYALKGVRPDDELAVLPEDIVLESVIKLDVPELDGERHLIILKSN</sequence>